<sequence length="874" mass="94882">MKSSEIRQKFLQFFQSKGHTIVPSSSLVPANDPTLLFTNSGMVQFKDVFTGKEARAYKRATSSQRSVRAGGKHNDLENVGYTARHHTFFEMLGNFSFGDYFKREAIQYAWELLTQVYRLPAEKLWVTVYQEDDEAYDIWAKEVGVPAERIIRIGDNKGARYASDNFWQMADTGPCGPCSEIFYDHGPEIWGGPPGSLEEDGDRYIEIWNLVFMQFERDAAGNMERLPKPCVDTGMGLERIAAVLQHVHSNYEIDLFQKLIAAAARETGVKDLADNSLKVIADHIRACAFLIVDGIIPSNEGRGYVLRRIVRRALRHGYKLGQTKPFFHRLVPDLVAEMGEAYPELAQVAERVAQVLRQEEKRFGETLEHGMKILDGALAKVAKGDPLDGTTLFTLYDTYGFPVDLTADICRERGVEVDMAGFEAAMQRQREQARAAGKFKMAEGLSYEGAETRFEGYESLELSGVKVTALYVEGTQVEQVSAGQDAVVVLDATPFYAESGGQVGDTGLLEAGGVRFAVADTLKIQPGVFGHHGTLEAGALKVGDTLLARVDAVRRARTVRNHSATHLMHKALREVLGAHVQQRGSLVDPDKTRFDFAHDAPMTAEQIARVEAIVNAEVLANQATEAKVMAYDDAVKGGAMALFGEKYGDTVRVLDIGFSRELCGGTHVRRTGDIGLFKVVSEGGVAAGVRRIEAITGDNALAWVQDQNVLLQRAAGVLRAPAHELPERIAQVQEQLKALEKELEQARTKLAASAGNDLAATATVEVKGIKVLAASIGDVDPKALRGMVDNLKDRLKPAVVLLAAGSADGKISLVGGVTADLTGRIKAGDLVGFVAGQVGGKGGGRPDMAMGGGTDLAALPAAVASVQKWVDERL</sequence>
<dbReference type="EC" id="6.1.1.7" evidence="1"/>
<dbReference type="EMBL" id="BX640431">
    <property type="protein sequence ID" value="CAE38162.1"/>
    <property type="molecule type" value="Genomic_DNA"/>
</dbReference>
<dbReference type="RefSeq" id="WP_010928774.1">
    <property type="nucleotide sequence ID" value="NC_002928.3"/>
</dbReference>
<dbReference type="SMR" id="Q7W6N4"/>
<dbReference type="GeneID" id="93204657"/>
<dbReference type="KEGG" id="bpa:BPP2870"/>
<dbReference type="HOGENOM" id="CLU_004485_1_1_4"/>
<dbReference type="Proteomes" id="UP000001421">
    <property type="component" value="Chromosome"/>
</dbReference>
<dbReference type="GO" id="GO:0005829">
    <property type="term" value="C:cytosol"/>
    <property type="evidence" value="ECO:0007669"/>
    <property type="project" value="TreeGrafter"/>
</dbReference>
<dbReference type="GO" id="GO:0004813">
    <property type="term" value="F:alanine-tRNA ligase activity"/>
    <property type="evidence" value="ECO:0007669"/>
    <property type="project" value="UniProtKB-UniRule"/>
</dbReference>
<dbReference type="GO" id="GO:0002161">
    <property type="term" value="F:aminoacyl-tRNA deacylase activity"/>
    <property type="evidence" value="ECO:0007669"/>
    <property type="project" value="TreeGrafter"/>
</dbReference>
<dbReference type="GO" id="GO:0005524">
    <property type="term" value="F:ATP binding"/>
    <property type="evidence" value="ECO:0007669"/>
    <property type="project" value="UniProtKB-UniRule"/>
</dbReference>
<dbReference type="GO" id="GO:0000049">
    <property type="term" value="F:tRNA binding"/>
    <property type="evidence" value="ECO:0007669"/>
    <property type="project" value="UniProtKB-KW"/>
</dbReference>
<dbReference type="GO" id="GO:0008270">
    <property type="term" value="F:zinc ion binding"/>
    <property type="evidence" value="ECO:0007669"/>
    <property type="project" value="UniProtKB-UniRule"/>
</dbReference>
<dbReference type="GO" id="GO:0006419">
    <property type="term" value="P:alanyl-tRNA aminoacylation"/>
    <property type="evidence" value="ECO:0007669"/>
    <property type="project" value="UniProtKB-UniRule"/>
</dbReference>
<dbReference type="GO" id="GO:0045892">
    <property type="term" value="P:negative regulation of DNA-templated transcription"/>
    <property type="evidence" value="ECO:0007669"/>
    <property type="project" value="TreeGrafter"/>
</dbReference>
<dbReference type="CDD" id="cd00673">
    <property type="entry name" value="AlaRS_core"/>
    <property type="match status" value="1"/>
</dbReference>
<dbReference type="FunFam" id="2.40.30.130:FF:000001">
    <property type="entry name" value="Alanine--tRNA ligase"/>
    <property type="match status" value="1"/>
</dbReference>
<dbReference type="FunFam" id="3.10.310.40:FF:000001">
    <property type="entry name" value="Alanine--tRNA ligase"/>
    <property type="match status" value="1"/>
</dbReference>
<dbReference type="FunFam" id="3.30.54.20:FF:000001">
    <property type="entry name" value="Alanine--tRNA ligase"/>
    <property type="match status" value="1"/>
</dbReference>
<dbReference type="FunFam" id="3.30.930.10:FF:000004">
    <property type="entry name" value="Alanine--tRNA ligase"/>
    <property type="match status" value="1"/>
</dbReference>
<dbReference type="FunFam" id="3.30.980.10:FF:000004">
    <property type="entry name" value="Alanine--tRNA ligase, cytoplasmic"/>
    <property type="match status" value="1"/>
</dbReference>
<dbReference type="Gene3D" id="2.40.30.130">
    <property type="match status" value="1"/>
</dbReference>
<dbReference type="Gene3D" id="3.10.310.40">
    <property type="match status" value="1"/>
</dbReference>
<dbReference type="Gene3D" id="3.30.54.20">
    <property type="match status" value="1"/>
</dbReference>
<dbReference type="Gene3D" id="6.10.250.550">
    <property type="match status" value="1"/>
</dbReference>
<dbReference type="Gene3D" id="3.30.930.10">
    <property type="entry name" value="Bira Bifunctional Protein, Domain 2"/>
    <property type="match status" value="1"/>
</dbReference>
<dbReference type="Gene3D" id="3.30.980.10">
    <property type="entry name" value="Threonyl-trna Synthetase, Chain A, domain 2"/>
    <property type="match status" value="1"/>
</dbReference>
<dbReference type="HAMAP" id="MF_00036_B">
    <property type="entry name" value="Ala_tRNA_synth_B"/>
    <property type="match status" value="1"/>
</dbReference>
<dbReference type="InterPro" id="IPR045864">
    <property type="entry name" value="aa-tRNA-synth_II/BPL/LPL"/>
</dbReference>
<dbReference type="InterPro" id="IPR002318">
    <property type="entry name" value="Ala-tRNA-lgiase_IIc"/>
</dbReference>
<dbReference type="InterPro" id="IPR018162">
    <property type="entry name" value="Ala-tRNA-ligase_IIc_anticod-bd"/>
</dbReference>
<dbReference type="InterPro" id="IPR018165">
    <property type="entry name" value="Ala-tRNA-synth_IIc_core"/>
</dbReference>
<dbReference type="InterPro" id="IPR018164">
    <property type="entry name" value="Ala-tRNA-synth_IIc_N"/>
</dbReference>
<dbReference type="InterPro" id="IPR050058">
    <property type="entry name" value="Ala-tRNA_ligase"/>
</dbReference>
<dbReference type="InterPro" id="IPR023033">
    <property type="entry name" value="Ala_tRNA_ligase_euk/bac"/>
</dbReference>
<dbReference type="InterPro" id="IPR003156">
    <property type="entry name" value="DHHA1_dom"/>
</dbReference>
<dbReference type="InterPro" id="IPR018163">
    <property type="entry name" value="Thr/Ala-tRNA-synth_IIc_edit"/>
</dbReference>
<dbReference type="InterPro" id="IPR009000">
    <property type="entry name" value="Transl_B-barrel_sf"/>
</dbReference>
<dbReference type="InterPro" id="IPR012947">
    <property type="entry name" value="tRNA_SAD"/>
</dbReference>
<dbReference type="NCBIfam" id="TIGR00344">
    <property type="entry name" value="alaS"/>
    <property type="match status" value="1"/>
</dbReference>
<dbReference type="PANTHER" id="PTHR11777:SF9">
    <property type="entry name" value="ALANINE--TRNA LIGASE, CYTOPLASMIC"/>
    <property type="match status" value="1"/>
</dbReference>
<dbReference type="PANTHER" id="PTHR11777">
    <property type="entry name" value="ALANYL-TRNA SYNTHETASE"/>
    <property type="match status" value="1"/>
</dbReference>
<dbReference type="Pfam" id="PF02272">
    <property type="entry name" value="DHHA1"/>
    <property type="match status" value="1"/>
</dbReference>
<dbReference type="Pfam" id="PF01411">
    <property type="entry name" value="tRNA-synt_2c"/>
    <property type="match status" value="1"/>
</dbReference>
<dbReference type="Pfam" id="PF07973">
    <property type="entry name" value="tRNA_SAD"/>
    <property type="match status" value="1"/>
</dbReference>
<dbReference type="PRINTS" id="PR00980">
    <property type="entry name" value="TRNASYNTHALA"/>
</dbReference>
<dbReference type="SMART" id="SM00863">
    <property type="entry name" value="tRNA_SAD"/>
    <property type="match status" value="1"/>
</dbReference>
<dbReference type="SUPFAM" id="SSF55681">
    <property type="entry name" value="Class II aaRS and biotin synthetases"/>
    <property type="match status" value="1"/>
</dbReference>
<dbReference type="SUPFAM" id="SSF101353">
    <property type="entry name" value="Putative anticodon-binding domain of alanyl-tRNA synthetase (AlaRS)"/>
    <property type="match status" value="1"/>
</dbReference>
<dbReference type="SUPFAM" id="SSF55186">
    <property type="entry name" value="ThrRS/AlaRS common domain"/>
    <property type="match status" value="1"/>
</dbReference>
<dbReference type="SUPFAM" id="SSF50447">
    <property type="entry name" value="Translation proteins"/>
    <property type="match status" value="1"/>
</dbReference>
<dbReference type="PROSITE" id="PS50860">
    <property type="entry name" value="AA_TRNA_LIGASE_II_ALA"/>
    <property type="match status" value="1"/>
</dbReference>
<proteinExistence type="inferred from homology"/>
<keyword id="KW-0030">Aminoacyl-tRNA synthetase</keyword>
<keyword id="KW-0067">ATP-binding</keyword>
<keyword id="KW-0963">Cytoplasm</keyword>
<keyword id="KW-0436">Ligase</keyword>
<keyword id="KW-0479">Metal-binding</keyword>
<keyword id="KW-0547">Nucleotide-binding</keyword>
<keyword id="KW-0648">Protein biosynthesis</keyword>
<keyword id="KW-0694">RNA-binding</keyword>
<keyword id="KW-0820">tRNA-binding</keyword>
<keyword id="KW-0862">Zinc</keyword>
<protein>
    <recommendedName>
        <fullName evidence="1">Alanine--tRNA ligase</fullName>
        <ecNumber evidence="1">6.1.1.7</ecNumber>
    </recommendedName>
    <alternativeName>
        <fullName evidence="1">Alanyl-tRNA synthetase</fullName>
        <shortName evidence="1">AlaRS</shortName>
    </alternativeName>
</protein>
<name>SYA_BORPA</name>
<reference key="1">
    <citation type="journal article" date="2003" name="Nat. Genet.">
        <title>Comparative analysis of the genome sequences of Bordetella pertussis, Bordetella parapertussis and Bordetella bronchiseptica.</title>
        <authorList>
            <person name="Parkhill J."/>
            <person name="Sebaihia M."/>
            <person name="Preston A."/>
            <person name="Murphy L.D."/>
            <person name="Thomson N.R."/>
            <person name="Harris D.E."/>
            <person name="Holden M.T.G."/>
            <person name="Churcher C.M."/>
            <person name="Bentley S.D."/>
            <person name="Mungall K.L."/>
            <person name="Cerdeno-Tarraga A.-M."/>
            <person name="Temple L."/>
            <person name="James K.D."/>
            <person name="Harris B."/>
            <person name="Quail M.A."/>
            <person name="Achtman M."/>
            <person name="Atkin R."/>
            <person name="Baker S."/>
            <person name="Basham D."/>
            <person name="Bason N."/>
            <person name="Cherevach I."/>
            <person name="Chillingworth T."/>
            <person name="Collins M."/>
            <person name="Cronin A."/>
            <person name="Davis P."/>
            <person name="Doggett J."/>
            <person name="Feltwell T."/>
            <person name="Goble A."/>
            <person name="Hamlin N."/>
            <person name="Hauser H."/>
            <person name="Holroyd S."/>
            <person name="Jagels K."/>
            <person name="Leather S."/>
            <person name="Moule S."/>
            <person name="Norberczak H."/>
            <person name="O'Neil S."/>
            <person name="Ormond D."/>
            <person name="Price C."/>
            <person name="Rabbinowitsch E."/>
            <person name="Rutter S."/>
            <person name="Sanders M."/>
            <person name="Saunders D."/>
            <person name="Seeger K."/>
            <person name="Sharp S."/>
            <person name="Simmonds M."/>
            <person name="Skelton J."/>
            <person name="Squares R."/>
            <person name="Squares S."/>
            <person name="Stevens K."/>
            <person name="Unwin L."/>
            <person name="Whitehead S."/>
            <person name="Barrell B.G."/>
            <person name="Maskell D.J."/>
        </authorList>
    </citation>
    <scope>NUCLEOTIDE SEQUENCE [LARGE SCALE GENOMIC DNA]</scope>
    <source>
        <strain>12822 / ATCC BAA-587 / NCTC 13253</strain>
    </source>
</reference>
<accession>Q7W6N4</accession>
<organism>
    <name type="scientific">Bordetella parapertussis (strain 12822 / ATCC BAA-587 / NCTC 13253)</name>
    <dbReference type="NCBI Taxonomy" id="257311"/>
    <lineage>
        <taxon>Bacteria</taxon>
        <taxon>Pseudomonadati</taxon>
        <taxon>Pseudomonadota</taxon>
        <taxon>Betaproteobacteria</taxon>
        <taxon>Burkholderiales</taxon>
        <taxon>Alcaligenaceae</taxon>
        <taxon>Bordetella</taxon>
    </lineage>
</organism>
<comment type="function">
    <text evidence="1">Catalyzes the attachment of alanine to tRNA(Ala) in a two-step reaction: alanine is first activated by ATP to form Ala-AMP and then transferred to the acceptor end of tRNA(Ala). Also edits incorrectly charged Ser-tRNA(Ala) and Gly-tRNA(Ala) via its editing domain.</text>
</comment>
<comment type="catalytic activity">
    <reaction evidence="1">
        <text>tRNA(Ala) + L-alanine + ATP = L-alanyl-tRNA(Ala) + AMP + diphosphate</text>
        <dbReference type="Rhea" id="RHEA:12540"/>
        <dbReference type="Rhea" id="RHEA-COMP:9657"/>
        <dbReference type="Rhea" id="RHEA-COMP:9923"/>
        <dbReference type="ChEBI" id="CHEBI:30616"/>
        <dbReference type="ChEBI" id="CHEBI:33019"/>
        <dbReference type="ChEBI" id="CHEBI:57972"/>
        <dbReference type="ChEBI" id="CHEBI:78442"/>
        <dbReference type="ChEBI" id="CHEBI:78497"/>
        <dbReference type="ChEBI" id="CHEBI:456215"/>
        <dbReference type="EC" id="6.1.1.7"/>
    </reaction>
</comment>
<comment type="cofactor">
    <cofactor evidence="1">
        <name>Zn(2+)</name>
        <dbReference type="ChEBI" id="CHEBI:29105"/>
    </cofactor>
    <text evidence="1">Binds 1 zinc ion per subunit.</text>
</comment>
<comment type="subcellular location">
    <subcellularLocation>
        <location evidence="1">Cytoplasm</location>
    </subcellularLocation>
</comment>
<comment type="domain">
    <text evidence="1">Consists of three domains; the N-terminal catalytic domain, the editing domain and the C-terminal C-Ala domain. The editing domain removes incorrectly charged amino acids, while the C-Ala domain, along with tRNA(Ala), serves as a bridge to cooperatively bring together the editing and aminoacylation centers thus stimulating deacylation of misacylated tRNAs.</text>
</comment>
<comment type="similarity">
    <text evidence="1">Belongs to the class-II aminoacyl-tRNA synthetase family.</text>
</comment>
<gene>
    <name evidence="1" type="primary">alaS</name>
    <name type="synonym">lovB</name>
    <name type="ordered locus">BPP2870</name>
</gene>
<feature type="chain" id="PRO_0000075070" description="Alanine--tRNA ligase">
    <location>
        <begin position="1"/>
        <end position="874"/>
    </location>
</feature>
<feature type="binding site" evidence="1">
    <location>
        <position position="562"/>
    </location>
    <ligand>
        <name>Zn(2+)</name>
        <dbReference type="ChEBI" id="CHEBI:29105"/>
    </ligand>
</feature>
<feature type="binding site" evidence="1">
    <location>
        <position position="566"/>
    </location>
    <ligand>
        <name>Zn(2+)</name>
        <dbReference type="ChEBI" id="CHEBI:29105"/>
    </ligand>
</feature>
<feature type="binding site" evidence="1">
    <location>
        <position position="663"/>
    </location>
    <ligand>
        <name>Zn(2+)</name>
        <dbReference type="ChEBI" id="CHEBI:29105"/>
    </ligand>
</feature>
<feature type="binding site" evidence="1">
    <location>
        <position position="667"/>
    </location>
    <ligand>
        <name>Zn(2+)</name>
        <dbReference type="ChEBI" id="CHEBI:29105"/>
    </ligand>
</feature>
<evidence type="ECO:0000255" key="1">
    <source>
        <dbReference type="HAMAP-Rule" id="MF_00036"/>
    </source>
</evidence>